<accession>Q2YXI3</accession>
<dbReference type="EC" id="3.1.26.3" evidence="1"/>
<dbReference type="EMBL" id="AJ938182">
    <property type="protein sequence ID" value="CAI80786.1"/>
    <property type="molecule type" value="Genomic_DNA"/>
</dbReference>
<dbReference type="RefSeq" id="WP_000043234.1">
    <property type="nucleotide sequence ID" value="NC_007622.1"/>
</dbReference>
<dbReference type="SMR" id="Q2YXI3"/>
<dbReference type="KEGG" id="sab:SAB1097"/>
<dbReference type="HOGENOM" id="CLU_000907_1_3_9"/>
<dbReference type="GO" id="GO:0005737">
    <property type="term" value="C:cytoplasm"/>
    <property type="evidence" value="ECO:0007669"/>
    <property type="project" value="UniProtKB-SubCell"/>
</dbReference>
<dbReference type="GO" id="GO:0003725">
    <property type="term" value="F:double-stranded RNA binding"/>
    <property type="evidence" value="ECO:0007669"/>
    <property type="project" value="TreeGrafter"/>
</dbReference>
<dbReference type="GO" id="GO:0046872">
    <property type="term" value="F:metal ion binding"/>
    <property type="evidence" value="ECO:0007669"/>
    <property type="project" value="UniProtKB-KW"/>
</dbReference>
<dbReference type="GO" id="GO:0004525">
    <property type="term" value="F:ribonuclease III activity"/>
    <property type="evidence" value="ECO:0007669"/>
    <property type="project" value="UniProtKB-UniRule"/>
</dbReference>
<dbReference type="GO" id="GO:0019843">
    <property type="term" value="F:rRNA binding"/>
    <property type="evidence" value="ECO:0007669"/>
    <property type="project" value="UniProtKB-KW"/>
</dbReference>
<dbReference type="GO" id="GO:0006397">
    <property type="term" value="P:mRNA processing"/>
    <property type="evidence" value="ECO:0007669"/>
    <property type="project" value="UniProtKB-UniRule"/>
</dbReference>
<dbReference type="GO" id="GO:0010468">
    <property type="term" value="P:regulation of gene expression"/>
    <property type="evidence" value="ECO:0007669"/>
    <property type="project" value="TreeGrafter"/>
</dbReference>
<dbReference type="GO" id="GO:0006364">
    <property type="term" value="P:rRNA processing"/>
    <property type="evidence" value="ECO:0007669"/>
    <property type="project" value="UniProtKB-UniRule"/>
</dbReference>
<dbReference type="GO" id="GO:0008033">
    <property type="term" value="P:tRNA processing"/>
    <property type="evidence" value="ECO:0007669"/>
    <property type="project" value="UniProtKB-KW"/>
</dbReference>
<dbReference type="CDD" id="cd10845">
    <property type="entry name" value="DSRM_RNAse_III_family"/>
    <property type="match status" value="1"/>
</dbReference>
<dbReference type="CDD" id="cd00593">
    <property type="entry name" value="RIBOc"/>
    <property type="match status" value="1"/>
</dbReference>
<dbReference type="FunFam" id="1.10.1520.10:FF:000001">
    <property type="entry name" value="Ribonuclease 3"/>
    <property type="match status" value="1"/>
</dbReference>
<dbReference type="FunFam" id="3.30.160.20:FF:000003">
    <property type="entry name" value="Ribonuclease 3"/>
    <property type="match status" value="1"/>
</dbReference>
<dbReference type="Gene3D" id="3.30.160.20">
    <property type="match status" value="1"/>
</dbReference>
<dbReference type="Gene3D" id="1.10.1520.10">
    <property type="entry name" value="Ribonuclease III domain"/>
    <property type="match status" value="1"/>
</dbReference>
<dbReference type="HAMAP" id="MF_00104">
    <property type="entry name" value="RNase_III"/>
    <property type="match status" value="1"/>
</dbReference>
<dbReference type="InterPro" id="IPR014720">
    <property type="entry name" value="dsRBD_dom"/>
</dbReference>
<dbReference type="InterPro" id="IPR011907">
    <property type="entry name" value="RNase_III"/>
</dbReference>
<dbReference type="InterPro" id="IPR000999">
    <property type="entry name" value="RNase_III_dom"/>
</dbReference>
<dbReference type="InterPro" id="IPR036389">
    <property type="entry name" value="RNase_III_sf"/>
</dbReference>
<dbReference type="NCBIfam" id="TIGR02191">
    <property type="entry name" value="RNaseIII"/>
    <property type="match status" value="1"/>
</dbReference>
<dbReference type="PANTHER" id="PTHR11207:SF0">
    <property type="entry name" value="RIBONUCLEASE 3"/>
    <property type="match status" value="1"/>
</dbReference>
<dbReference type="PANTHER" id="PTHR11207">
    <property type="entry name" value="RIBONUCLEASE III"/>
    <property type="match status" value="1"/>
</dbReference>
<dbReference type="Pfam" id="PF00035">
    <property type="entry name" value="dsrm"/>
    <property type="match status" value="1"/>
</dbReference>
<dbReference type="Pfam" id="PF14622">
    <property type="entry name" value="Ribonucleas_3_3"/>
    <property type="match status" value="1"/>
</dbReference>
<dbReference type="SMART" id="SM00358">
    <property type="entry name" value="DSRM"/>
    <property type="match status" value="1"/>
</dbReference>
<dbReference type="SMART" id="SM00535">
    <property type="entry name" value="RIBOc"/>
    <property type="match status" value="1"/>
</dbReference>
<dbReference type="SUPFAM" id="SSF54768">
    <property type="entry name" value="dsRNA-binding domain-like"/>
    <property type="match status" value="1"/>
</dbReference>
<dbReference type="SUPFAM" id="SSF69065">
    <property type="entry name" value="RNase III domain-like"/>
    <property type="match status" value="1"/>
</dbReference>
<dbReference type="PROSITE" id="PS50137">
    <property type="entry name" value="DS_RBD"/>
    <property type="match status" value="1"/>
</dbReference>
<dbReference type="PROSITE" id="PS00517">
    <property type="entry name" value="RNASE_3_1"/>
    <property type="match status" value="1"/>
</dbReference>
<dbReference type="PROSITE" id="PS50142">
    <property type="entry name" value="RNASE_3_2"/>
    <property type="match status" value="1"/>
</dbReference>
<reference key="1">
    <citation type="journal article" date="2007" name="PLoS ONE">
        <title>Molecular correlates of host specialization in Staphylococcus aureus.</title>
        <authorList>
            <person name="Herron-Olson L."/>
            <person name="Fitzgerald J.R."/>
            <person name="Musser J.M."/>
            <person name="Kapur V."/>
        </authorList>
    </citation>
    <scope>NUCLEOTIDE SEQUENCE [LARGE SCALE GENOMIC DNA]</scope>
    <source>
        <strain>bovine RF122 / ET3-1</strain>
    </source>
</reference>
<keyword id="KW-0963">Cytoplasm</keyword>
<keyword id="KW-0255">Endonuclease</keyword>
<keyword id="KW-0378">Hydrolase</keyword>
<keyword id="KW-0460">Magnesium</keyword>
<keyword id="KW-0479">Metal-binding</keyword>
<keyword id="KW-0507">mRNA processing</keyword>
<keyword id="KW-0540">Nuclease</keyword>
<keyword id="KW-0694">RNA-binding</keyword>
<keyword id="KW-0698">rRNA processing</keyword>
<keyword id="KW-0699">rRNA-binding</keyword>
<keyword id="KW-0819">tRNA processing</keyword>
<feature type="chain" id="PRO_0000228584" description="Ribonuclease 3">
    <location>
        <begin position="1"/>
        <end position="243"/>
    </location>
</feature>
<feature type="domain" description="RNase III" evidence="1">
    <location>
        <begin position="10"/>
        <end position="146"/>
    </location>
</feature>
<feature type="domain" description="DRBM" evidence="1">
    <location>
        <begin position="172"/>
        <end position="241"/>
    </location>
</feature>
<feature type="region of interest" description="Disordered" evidence="2">
    <location>
        <begin position="219"/>
        <end position="243"/>
    </location>
</feature>
<feature type="compositionally biased region" description="Basic and acidic residues" evidence="2">
    <location>
        <begin position="219"/>
        <end position="231"/>
    </location>
</feature>
<feature type="active site" evidence="1">
    <location>
        <position position="63"/>
    </location>
</feature>
<feature type="active site" evidence="1">
    <location>
        <position position="135"/>
    </location>
</feature>
<feature type="binding site" evidence="1">
    <location>
        <position position="59"/>
    </location>
    <ligand>
        <name>Mg(2+)</name>
        <dbReference type="ChEBI" id="CHEBI:18420"/>
    </ligand>
</feature>
<feature type="binding site" evidence="1">
    <location>
        <position position="132"/>
    </location>
    <ligand>
        <name>Mg(2+)</name>
        <dbReference type="ChEBI" id="CHEBI:18420"/>
    </ligand>
</feature>
<feature type="binding site" evidence="1">
    <location>
        <position position="135"/>
    </location>
    <ligand>
        <name>Mg(2+)</name>
        <dbReference type="ChEBI" id="CHEBI:18420"/>
    </ligand>
</feature>
<proteinExistence type="inferred from homology"/>
<comment type="function">
    <text evidence="1">Digests double-stranded RNA. Involved in the processing of primary rRNA transcript to yield the immediate precursors to the large and small rRNAs (23S and 16S). Processes some mRNAs, and tRNAs when they are encoded in the rRNA operon. Processes pre-crRNA and tracrRNA of type II CRISPR loci if present in the organism.</text>
</comment>
<comment type="catalytic activity">
    <reaction evidence="1">
        <text>Endonucleolytic cleavage to 5'-phosphomonoester.</text>
        <dbReference type="EC" id="3.1.26.3"/>
    </reaction>
</comment>
<comment type="cofactor">
    <cofactor evidence="1">
        <name>Mg(2+)</name>
        <dbReference type="ChEBI" id="CHEBI:18420"/>
    </cofactor>
</comment>
<comment type="subunit">
    <text evidence="1">Homodimer.</text>
</comment>
<comment type="subcellular location">
    <subcellularLocation>
        <location evidence="1">Cytoplasm</location>
    </subcellularLocation>
</comment>
<comment type="similarity">
    <text evidence="1">Belongs to the ribonuclease III family.</text>
</comment>
<protein>
    <recommendedName>
        <fullName evidence="1">Ribonuclease 3</fullName>
        <ecNumber evidence="1">3.1.26.3</ecNumber>
    </recommendedName>
    <alternativeName>
        <fullName evidence="1">Ribonuclease III</fullName>
        <shortName evidence="1">RNase III</shortName>
    </alternativeName>
</protein>
<sequence length="243" mass="27964">MSKQKKSEIINRFRKRFDTKMTELGFTYQNIDLYQQAFSHSSFINDFNMNRLDHNERLEFLGDAVLELTVSRYLFDKHPNLPEGNLTKMRATIVCEPSLVIFANKIGLNEMILLGKGEEKTGGRTRPSLISDVFEAFIGALYLDQGLDIVWKFAEKVIFPHVEQNELLGVVDFKTQFQEYVHQQNKGDVTYNLIKEEGPAHHRLFTSEVILQGEAIAEGKGKTKKESEQRAAESAYKQLKQIK</sequence>
<organism>
    <name type="scientific">Staphylococcus aureus (strain bovine RF122 / ET3-1)</name>
    <dbReference type="NCBI Taxonomy" id="273036"/>
    <lineage>
        <taxon>Bacteria</taxon>
        <taxon>Bacillati</taxon>
        <taxon>Bacillota</taxon>
        <taxon>Bacilli</taxon>
        <taxon>Bacillales</taxon>
        <taxon>Staphylococcaceae</taxon>
        <taxon>Staphylococcus</taxon>
    </lineage>
</organism>
<evidence type="ECO:0000255" key="1">
    <source>
        <dbReference type="HAMAP-Rule" id="MF_00104"/>
    </source>
</evidence>
<evidence type="ECO:0000256" key="2">
    <source>
        <dbReference type="SAM" id="MobiDB-lite"/>
    </source>
</evidence>
<gene>
    <name evidence="1" type="primary">rnc</name>
    <name type="ordered locus">SAB1097</name>
</gene>
<name>RNC_STAAB</name>